<accession>O27389</accession>
<reference key="1">
    <citation type="journal article" date="1997" name="J. Bacteriol.">
        <title>Complete genome sequence of Methanobacterium thermoautotrophicum deltaH: functional analysis and comparative genomics.</title>
        <authorList>
            <person name="Smith D.R."/>
            <person name="Doucette-Stamm L.A."/>
            <person name="Deloughery C."/>
            <person name="Lee H.-M."/>
            <person name="Dubois J."/>
            <person name="Aldredge T."/>
            <person name="Bashirzadeh R."/>
            <person name="Blakely D."/>
            <person name="Cook R."/>
            <person name="Gilbert K."/>
            <person name="Harrison D."/>
            <person name="Hoang L."/>
            <person name="Keagle P."/>
            <person name="Lumm W."/>
            <person name="Pothier B."/>
            <person name="Qiu D."/>
            <person name="Spadafora R."/>
            <person name="Vicare R."/>
            <person name="Wang Y."/>
            <person name="Wierzbowski J."/>
            <person name="Gibson R."/>
            <person name="Jiwani N."/>
            <person name="Caruso A."/>
            <person name="Bush D."/>
            <person name="Safer H."/>
            <person name="Patwell D."/>
            <person name="Prabhakar S."/>
            <person name="McDougall S."/>
            <person name="Shimer G."/>
            <person name="Goyal A."/>
            <person name="Pietrovski S."/>
            <person name="Church G.M."/>
            <person name="Daniels C.J."/>
            <person name="Mao J.-I."/>
            <person name="Rice P."/>
            <person name="Noelling J."/>
            <person name="Reeve J.N."/>
        </authorList>
    </citation>
    <scope>NUCLEOTIDE SEQUENCE [LARGE SCALE GENOMIC DNA]</scope>
    <source>
        <strain>ATCC 29096 / DSM 1053 / JCM 10044 / NBRC 100330 / Delta H</strain>
    </source>
</reference>
<proteinExistence type="inferred from homology"/>
<evidence type="ECO:0000255" key="1">
    <source>
        <dbReference type="HAMAP-Rule" id="MF_00197"/>
    </source>
</evidence>
<evidence type="ECO:0000305" key="2"/>
<keyword id="KW-0028">Amino-acid biosynthesis</keyword>
<keyword id="KW-0963">Cytoplasm</keyword>
<keyword id="KW-0413">Isomerase</keyword>
<keyword id="KW-0457">Lysine biosynthesis</keyword>
<keyword id="KW-1185">Reference proteome</keyword>
<protein>
    <recommendedName>
        <fullName evidence="1">Diaminopimelate epimerase</fullName>
        <shortName evidence="1">DAP epimerase</shortName>
        <ecNumber evidence="1">5.1.1.7</ecNumber>
    </recommendedName>
    <alternativeName>
        <fullName evidence="1">PLP-independent amino acid racemase</fullName>
    </alternativeName>
</protein>
<dbReference type="EC" id="5.1.1.7" evidence="1"/>
<dbReference type="EMBL" id="AE000666">
    <property type="protein sequence ID" value="AAB85812.1"/>
    <property type="status" value="ALT_INIT"/>
    <property type="molecule type" value="Genomic_DNA"/>
</dbReference>
<dbReference type="PIR" id="D69044">
    <property type="entry name" value="D69044"/>
</dbReference>
<dbReference type="SMR" id="O27389"/>
<dbReference type="FunCoup" id="O27389">
    <property type="interactions" value="155"/>
</dbReference>
<dbReference type="STRING" id="187420.MTH_1334"/>
<dbReference type="PaxDb" id="187420-MTH_1334"/>
<dbReference type="EnsemblBacteria" id="AAB85812">
    <property type="protein sequence ID" value="AAB85812"/>
    <property type="gene ID" value="MTH_1334"/>
</dbReference>
<dbReference type="KEGG" id="mth:MTH_1334"/>
<dbReference type="PATRIC" id="fig|187420.15.peg.1300"/>
<dbReference type="HOGENOM" id="CLU_053306_3_0_2"/>
<dbReference type="InParanoid" id="O27389"/>
<dbReference type="UniPathway" id="UPA00034">
    <property type="reaction ID" value="UER00025"/>
</dbReference>
<dbReference type="Proteomes" id="UP000005223">
    <property type="component" value="Chromosome"/>
</dbReference>
<dbReference type="GO" id="GO:0005829">
    <property type="term" value="C:cytosol"/>
    <property type="evidence" value="ECO:0007669"/>
    <property type="project" value="TreeGrafter"/>
</dbReference>
<dbReference type="GO" id="GO:0008837">
    <property type="term" value="F:diaminopimelate epimerase activity"/>
    <property type="evidence" value="ECO:0007669"/>
    <property type="project" value="UniProtKB-UniRule"/>
</dbReference>
<dbReference type="GO" id="GO:0009089">
    <property type="term" value="P:lysine biosynthetic process via diaminopimelate"/>
    <property type="evidence" value="ECO:0007669"/>
    <property type="project" value="UniProtKB-UniRule"/>
</dbReference>
<dbReference type="FunFam" id="3.10.310.10:FF:000001">
    <property type="entry name" value="Diaminopimelate epimerase"/>
    <property type="match status" value="1"/>
</dbReference>
<dbReference type="Gene3D" id="3.10.310.10">
    <property type="entry name" value="Diaminopimelate Epimerase, Chain A, domain 1"/>
    <property type="match status" value="2"/>
</dbReference>
<dbReference type="HAMAP" id="MF_00197">
    <property type="entry name" value="DAP_epimerase"/>
    <property type="match status" value="1"/>
</dbReference>
<dbReference type="InterPro" id="IPR018510">
    <property type="entry name" value="DAP_epimerase_AS"/>
</dbReference>
<dbReference type="InterPro" id="IPR001653">
    <property type="entry name" value="DAP_epimerase_DapF"/>
</dbReference>
<dbReference type="NCBIfam" id="TIGR00652">
    <property type="entry name" value="DapF"/>
    <property type="match status" value="1"/>
</dbReference>
<dbReference type="PANTHER" id="PTHR31689:SF0">
    <property type="entry name" value="DIAMINOPIMELATE EPIMERASE"/>
    <property type="match status" value="1"/>
</dbReference>
<dbReference type="PANTHER" id="PTHR31689">
    <property type="entry name" value="DIAMINOPIMELATE EPIMERASE, CHLOROPLASTIC"/>
    <property type="match status" value="1"/>
</dbReference>
<dbReference type="Pfam" id="PF01678">
    <property type="entry name" value="DAP_epimerase"/>
    <property type="match status" value="2"/>
</dbReference>
<dbReference type="SUPFAM" id="SSF54506">
    <property type="entry name" value="Diaminopimelate epimerase-like"/>
    <property type="match status" value="2"/>
</dbReference>
<dbReference type="PROSITE" id="PS01326">
    <property type="entry name" value="DAP_EPIMERASE"/>
    <property type="match status" value="1"/>
</dbReference>
<name>DAPF_METTH</name>
<comment type="function">
    <text evidence="1">Catalyzes the stereoinversion of LL-2,6-diaminopimelate (L,L-DAP) to meso-diaminopimelate (meso-DAP), a precursor of L-lysine.</text>
</comment>
<comment type="catalytic activity">
    <reaction evidence="1">
        <text>(2S,6S)-2,6-diaminopimelate = meso-2,6-diaminopimelate</text>
        <dbReference type="Rhea" id="RHEA:15393"/>
        <dbReference type="ChEBI" id="CHEBI:57609"/>
        <dbReference type="ChEBI" id="CHEBI:57791"/>
        <dbReference type="EC" id="5.1.1.7"/>
    </reaction>
</comment>
<comment type="pathway">
    <text evidence="1">Amino-acid biosynthesis; L-lysine biosynthesis via DAP pathway; DL-2,6-diaminopimelate from LL-2,6-diaminopimelate: step 1/1.</text>
</comment>
<comment type="subunit">
    <text evidence="1">Homodimer.</text>
</comment>
<comment type="subcellular location">
    <subcellularLocation>
        <location evidence="1">Cytoplasm</location>
    </subcellularLocation>
</comment>
<comment type="similarity">
    <text evidence="1">Belongs to the diaminopimelate epimerase family.</text>
</comment>
<comment type="sequence caution" evidence="2">
    <conflict type="erroneous initiation">
        <sequence resource="EMBL-CDS" id="AAB85812"/>
    </conflict>
    <text>Extended N-terminus.</text>
</comment>
<feature type="chain" id="PRO_0000149888" description="Diaminopimelate epimerase">
    <location>
        <begin position="1"/>
        <end position="286"/>
    </location>
</feature>
<feature type="active site" description="Proton donor" evidence="1">
    <location>
        <position position="76"/>
    </location>
</feature>
<feature type="active site" description="Proton acceptor" evidence="1">
    <location>
        <position position="225"/>
    </location>
</feature>
<feature type="binding site" evidence="1">
    <location>
        <position position="12"/>
    </location>
    <ligand>
        <name>substrate</name>
    </ligand>
</feature>
<feature type="binding site" evidence="1">
    <location>
        <position position="67"/>
    </location>
    <ligand>
        <name>substrate</name>
    </ligand>
</feature>
<feature type="binding site" evidence="1">
    <location>
        <begin position="77"/>
        <end position="78"/>
    </location>
    <ligand>
        <name>substrate</name>
    </ligand>
</feature>
<feature type="binding site" evidence="1">
    <location>
        <position position="165"/>
    </location>
    <ligand>
        <name>substrate</name>
    </ligand>
</feature>
<feature type="binding site" evidence="1">
    <location>
        <position position="198"/>
    </location>
    <ligand>
        <name>substrate</name>
    </ligand>
</feature>
<feature type="binding site" evidence="1">
    <location>
        <begin position="216"/>
        <end position="217"/>
    </location>
    <ligand>
        <name>substrate</name>
    </ligand>
</feature>
<feature type="binding site" evidence="1">
    <location>
        <begin position="226"/>
        <end position="227"/>
    </location>
    <ligand>
        <name>substrate</name>
    </ligand>
</feature>
<feature type="site" description="Could be important to modulate the pK values of the two catalytic cysteine residues" evidence="1">
    <location>
        <position position="167"/>
    </location>
</feature>
<feature type="site" description="Could be important to modulate the pK values of the two catalytic cysteine residues" evidence="1">
    <location>
        <position position="216"/>
    </location>
</feature>
<gene>
    <name evidence="1" type="primary">dapF</name>
    <name type="ordered locus">MTH_1334</name>
</gene>
<sequence>MILFSKMHGLGNDYVVIDESAQECIPEDKKPEFVREVCTRGFSVGADGVIFVQPASGEGDIRFRIFNADGSEAEMCGNGIRCFSKFVYDNAIVRKRRLEVETLAGIKTVELEVEDGAVVSSRVDMGTATFKTDQIPMDVEEYEFIDRFLPVEGEDIKLTALSVGNPHAIIFVDDAEGVDLDRLGPAIENHPLFPERINVHFVEVVSPSEIIMVTWERGAGPTMACGTGATASVIAGVKLEKLDDSVLVHLPGGELKIDVYQDGTELGAYMEGDAVMVFDGILLRDP</sequence>
<organism>
    <name type="scientific">Methanothermobacter thermautotrophicus (strain ATCC 29096 / DSM 1053 / JCM 10044 / NBRC 100330 / Delta H)</name>
    <name type="common">Methanobacterium thermoautotrophicum</name>
    <dbReference type="NCBI Taxonomy" id="187420"/>
    <lineage>
        <taxon>Archaea</taxon>
        <taxon>Methanobacteriati</taxon>
        <taxon>Methanobacteriota</taxon>
        <taxon>Methanomada group</taxon>
        <taxon>Methanobacteria</taxon>
        <taxon>Methanobacteriales</taxon>
        <taxon>Methanobacteriaceae</taxon>
        <taxon>Methanothermobacter</taxon>
    </lineage>
</organism>